<gene>
    <name evidence="1" type="primary">rplB</name>
    <name type="ordered locus">APP7_1848</name>
</gene>
<comment type="function">
    <text evidence="1">One of the primary rRNA binding proteins. Required for association of the 30S and 50S subunits to form the 70S ribosome, for tRNA binding and peptide bond formation. It has been suggested to have peptidyltransferase activity; this is somewhat controversial. Makes several contacts with the 16S rRNA in the 70S ribosome.</text>
</comment>
<comment type="subunit">
    <text evidence="1">Part of the 50S ribosomal subunit. Forms a bridge to the 30S subunit in the 70S ribosome.</text>
</comment>
<comment type="similarity">
    <text evidence="1">Belongs to the universal ribosomal protein uL2 family.</text>
</comment>
<protein>
    <recommendedName>
        <fullName evidence="1">Large ribosomal subunit protein uL2</fullName>
    </recommendedName>
    <alternativeName>
        <fullName evidence="3">50S ribosomal protein L2</fullName>
    </alternativeName>
</protein>
<proteinExistence type="inferred from homology"/>
<organism>
    <name type="scientific">Actinobacillus pleuropneumoniae serotype 7 (strain AP76)</name>
    <dbReference type="NCBI Taxonomy" id="537457"/>
    <lineage>
        <taxon>Bacteria</taxon>
        <taxon>Pseudomonadati</taxon>
        <taxon>Pseudomonadota</taxon>
        <taxon>Gammaproteobacteria</taxon>
        <taxon>Pasteurellales</taxon>
        <taxon>Pasteurellaceae</taxon>
        <taxon>Actinobacillus</taxon>
    </lineage>
</organism>
<feature type="chain" id="PRO_1000141495" description="Large ribosomal subunit protein uL2">
    <location>
        <begin position="1"/>
        <end position="273"/>
    </location>
</feature>
<feature type="region of interest" description="Disordered" evidence="2">
    <location>
        <begin position="31"/>
        <end position="50"/>
    </location>
</feature>
<feature type="region of interest" description="Disordered" evidence="2">
    <location>
        <begin position="221"/>
        <end position="273"/>
    </location>
</feature>
<feature type="compositionally biased region" description="Basic residues" evidence="2">
    <location>
        <begin position="253"/>
        <end position="273"/>
    </location>
</feature>
<name>RL2_ACTP7</name>
<reference key="1">
    <citation type="submission" date="2008-06" db="EMBL/GenBank/DDBJ databases">
        <title>Genome and proteome analysis of A. pleuropneumoniae serotype 7.</title>
        <authorList>
            <person name="Linke B."/>
            <person name="Buettner F."/>
            <person name="Martinez-Arias R."/>
            <person name="Goesmann A."/>
            <person name="Baltes N."/>
            <person name="Tegetmeyer H."/>
            <person name="Singh M."/>
            <person name="Gerlach G.F."/>
        </authorList>
    </citation>
    <scope>NUCLEOTIDE SEQUENCE [LARGE SCALE GENOMIC DNA]</scope>
    <source>
        <strain>AP76</strain>
    </source>
</reference>
<accession>B3GZ14</accession>
<sequence>MAIVKCKPTSAGRRHVVKVVNAELHKGKPYAPLLDSKSKTGGRNNLGRITTRHIGGGHKQHYRLVDFKRNKLDIPAVVERLEYDPNRSANIALVLYKDGERRYILAPKGLSVGDTIQAGVSAPIKAGNALPMRNIPVGTTVHNVELKPGKGGQIARSAGAYVQIIAREGNYVTLRLRSGEMRKVLAECTATIGEVGNSEHMLRVLGKAGANRWRGVRPTVRGTAMNPVDHPHGGGEGRNFGKHPVTPWGVQTKGKKTRHNKRTDKYIVRRRGK</sequence>
<evidence type="ECO:0000255" key="1">
    <source>
        <dbReference type="HAMAP-Rule" id="MF_01320"/>
    </source>
</evidence>
<evidence type="ECO:0000256" key="2">
    <source>
        <dbReference type="SAM" id="MobiDB-lite"/>
    </source>
</evidence>
<evidence type="ECO:0000305" key="3"/>
<keyword id="KW-0687">Ribonucleoprotein</keyword>
<keyword id="KW-0689">Ribosomal protein</keyword>
<keyword id="KW-0694">RNA-binding</keyword>
<keyword id="KW-0699">rRNA-binding</keyword>
<dbReference type="EMBL" id="CP001091">
    <property type="protein sequence ID" value="ACE62500.1"/>
    <property type="molecule type" value="Genomic_DNA"/>
</dbReference>
<dbReference type="RefSeq" id="WP_005599291.1">
    <property type="nucleotide sequence ID" value="NC_010939.1"/>
</dbReference>
<dbReference type="SMR" id="B3GZ14"/>
<dbReference type="GeneID" id="48600055"/>
<dbReference type="KEGG" id="apa:APP7_1848"/>
<dbReference type="HOGENOM" id="CLU_036235_2_1_6"/>
<dbReference type="Proteomes" id="UP000001226">
    <property type="component" value="Chromosome"/>
</dbReference>
<dbReference type="GO" id="GO:0015934">
    <property type="term" value="C:large ribosomal subunit"/>
    <property type="evidence" value="ECO:0007669"/>
    <property type="project" value="InterPro"/>
</dbReference>
<dbReference type="GO" id="GO:0019843">
    <property type="term" value="F:rRNA binding"/>
    <property type="evidence" value="ECO:0007669"/>
    <property type="project" value="UniProtKB-UniRule"/>
</dbReference>
<dbReference type="GO" id="GO:0003735">
    <property type="term" value="F:structural constituent of ribosome"/>
    <property type="evidence" value="ECO:0007669"/>
    <property type="project" value="InterPro"/>
</dbReference>
<dbReference type="GO" id="GO:0016740">
    <property type="term" value="F:transferase activity"/>
    <property type="evidence" value="ECO:0007669"/>
    <property type="project" value="InterPro"/>
</dbReference>
<dbReference type="GO" id="GO:0002181">
    <property type="term" value="P:cytoplasmic translation"/>
    <property type="evidence" value="ECO:0007669"/>
    <property type="project" value="TreeGrafter"/>
</dbReference>
<dbReference type="FunFam" id="2.30.30.30:FF:000001">
    <property type="entry name" value="50S ribosomal protein L2"/>
    <property type="match status" value="1"/>
</dbReference>
<dbReference type="FunFam" id="2.40.50.140:FF:000003">
    <property type="entry name" value="50S ribosomal protein L2"/>
    <property type="match status" value="1"/>
</dbReference>
<dbReference type="FunFam" id="4.10.950.10:FF:000001">
    <property type="entry name" value="50S ribosomal protein L2"/>
    <property type="match status" value="1"/>
</dbReference>
<dbReference type="Gene3D" id="2.30.30.30">
    <property type="match status" value="1"/>
</dbReference>
<dbReference type="Gene3D" id="2.40.50.140">
    <property type="entry name" value="Nucleic acid-binding proteins"/>
    <property type="match status" value="1"/>
</dbReference>
<dbReference type="Gene3D" id="4.10.950.10">
    <property type="entry name" value="Ribosomal protein L2, domain 3"/>
    <property type="match status" value="1"/>
</dbReference>
<dbReference type="HAMAP" id="MF_01320_B">
    <property type="entry name" value="Ribosomal_uL2_B"/>
    <property type="match status" value="1"/>
</dbReference>
<dbReference type="InterPro" id="IPR012340">
    <property type="entry name" value="NA-bd_OB-fold"/>
</dbReference>
<dbReference type="InterPro" id="IPR014722">
    <property type="entry name" value="Rib_uL2_dom2"/>
</dbReference>
<dbReference type="InterPro" id="IPR002171">
    <property type="entry name" value="Ribosomal_uL2"/>
</dbReference>
<dbReference type="InterPro" id="IPR005880">
    <property type="entry name" value="Ribosomal_uL2_bac/org-type"/>
</dbReference>
<dbReference type="InterPro" id="IPR022669">
    <property type="entry name" value="Ribosomal_uL2_C"/>
</dbReference>
<dbReference type="InterPro" id="IPR022671">
    <property type="entry name" value="Ribosomal_uL2_CS"/>
</dbReference>
<dbReference type="InterPro" id="IPR014726">
    <property type="entry name" value="Ribosomal_uL2_dom3"/>
</dbReference>
<dbReference type="InterPro" id="IPR022666">
    <property type="entry name" value="Ribosomal_uL2_RNA-bd_dom"/>
</dbReference>
<dbReference type="InterPro" id="IPR008991">
    <property type="entry name" value="Translation_prot_SH3-like_sf"/>
</dbReference>
<dbReference type="NCBIfam" id="TIGR01171">
    <property type="entry name" value="rplB_bact"/>
    <property type="match status" value="1"/>
</dbReference>
<dbReference type="PANTHER" id="PTHR13691:SF5">
    <property type="entry name" value="LARGE RIBOSOMAL SUBUNIT PROTEIN UL2M"/>
    <property type="match status" value="1"/>
</dbReference>
<dbReference type="PANTHER" id="PTHR13691">
    <property type="entry name" value="RIBOSOMAL PROTEIN L2"/>
    <property type="match status" value="1"/>
</dbReference>
<dbReference type="Pfam" id="PF00181">
    <property type="entry name" value="Ribosomal_L2"/>
    <property type="match status" value="1"/>
</dbReference>
<dbReference type="Pfam" id="PF03947">
    <property type="entry name" value="Ribosomal_L2_C"/>
    <property type="match status" value="1"/>
</dbReference>
<dbReference type="PIRSF" id="PIRSF002158">
    <property type="entry name" value="Ribosomal_L2"/>
    <property type="match status" value="1"/>
</dbReference>
<dbReference type="SMART" id="SM01383">
    <property type="entry name" value="Ribosomal_L2"/>
    <property type="match status" value="1"/>
</dbReference>
<dbReference type="SMART" id="SM01382">
    <property type="entry name" value="Ribosomal_L2_C"/>
    <property type="match status" value="1"/>
</dbReference>
<dbReference type="SUPFAM" id="SSF50249">
    <property type="entry name" value="Nucleic acid-binding proteins"/>
    <property type="match status" value="1"/>
</dbReference>
<dbReference type="SUPFAM" id="SSF50104">
    <property type="entry name" value="Translation proteins SH3-like domain"/>
    <property type="match status" value="1"/>
</dbReference>
<dbReference type="PROSITE" id="PS00467">
    <property type="entry name" value="RIBOSOMAL_L2"/>
    <property type="match status" value="1"/>
</dbReference>